<sequence length="966" mass="107128">MSETNPAATAPVSADAAPHRYTAAMAAEIEARWQDFWDAEGTYAAPNPKGDLAGDPELVAKPKKFIMDMFPYPSGAGLHVGHPLGYIATDVFARFQRMTGHNVLHTLGFDAFGLPAEQYAVQTGTHPRVSTEANMKNMQSQLRRLGLGHDRRRSFATIDPEYYKWTQWIFLQIFNSWYDDEAKKARPIAELVAQFASGEREVPGHAGRAWSSLSEAERADVLGEYRLAYASDAPVNWCPGLGTVLANEEVTADGRSERGNFPVFKSKLRQWNMRITAYADRLLDDLDQLDWPEAIKLQQRNWIGRSEGARVDFPVDGERITVFTTRPDTLFGATYMVLAPEHPLVEKFTPAVWPEGTRDAWTGGHATPTEAVAAYRAQAASKSDVERQAEAKDKTGVFIGAYATNPVNGEQVPVFVADYVLMGYGTGAIMAVPAHDSRDFEFARAFELPVRCVVEPTDGRGTDTSTWDEAFASYDAKIVNSSGTDVSLDGLGVVEAKERVTEWLERAGAGAGTVNFRLRDWLFSRQRYWGEPFPIVYDEDGIAHPLPDSMLPLELPEVEDYSPRTFDPDDADTKPETPLSRNEDWVHVTLDLGDGRGPRKYRRETNTMPNWAGSCWYELRYLDPHNGERLVDPEIEQYWMGPREGLPHGGVDLYVGGAEHAVLHLLYARFWSKVLFDLGHVSSAEPFHKLFNQGMIQAYVYRDSRGIAVPAAEVEERDGAYYYQGEKVSRLLGKMGKSLKNAVTPDEICAEYGADTLRLYEMAMGPLDVSRPWDTRAVVGQFRLLQRLWRNVVDEDTGELSVADVAESDIDAGTLRALHKAVDGVRQDLEGMRFNTAIAKVTELNNHLTKAGGPVPRSVAERLVLLVAPLAPHVAEELWRKLGHESSVVHEDFPVADPAYVVDETVTCVVQIKGKVKARLEVAPSISEDDLEKAALADEKVVAALGGAGIRKVIVRAPKLVNIVPA</sequence>
<dbReference type="EC" id="6.1.1.4" evidence="1"/>
<dbReference type="EMBL" id="AL939113">
    <property type="protein sequence ID" value="CAB66249.1"/>
    <property type="molecule type" value="Genomic_DNA"/>
</dbReference>
<dbReference type="RefSeq" id="NP_626809.1">
    <property type="nucleotide sequence ID" value="NC_003888.3"/>
</dbReference>
<dbReference type="RefSeq" id="WP_003976232.1">
    <property type="nucleotide sequence ID" value="NZ_VNID01000001.1"/>
</dbReference>
<dbReference type="SMR" id="Q9RDL5"/>
<dbReference type="FunCoup" id="Q9RDL5">
    <property type="interactions" value="479"/>
</dbReference>
<dbReference type="STRING" id="100226.gene:17760173"/>
<dbReference type="PaxDb" id="100226-SCO2571"/>
<dbReference type="GeneID" id="91386433"/>
<dbReference type="KEGG" id="sco:SCO2571"/>
<dbReference type="PATRIC" id="fig|100226.15.peg.2616"/>
<dbReference type="eggNOG" id="COG0495">
    <property type="taxonomic scope" value="Bacteria"/>
</dbReference>
<dbReference type="HOGENOM" id="CLU_004427_0_0_11"/>
<dbReference type="InParanoid" id="Q9RDL5"/>
<dbReference type="OrthoDB" id="9810365at2"/>
<dbReference type="PhylomeDB" id="Q9RDL5"/>
<dbReference type="Proteomes" id="UP000001973">
    <property type="component" value="Chromosome"/>
</dbReference>
<dbReference type="GO" id="GO:0005829">
    <property type="term" value="C:cytosol"/>
    <property type="evidence" value="ECO:0000318"/>
    <property type="project" value="GO_Central"/>
</dbReference>
<dbReference type="GO" id="GO:0002161">
    <property type="term" value="F:aminoacyl-tRNA deacylase activity"/>
    <property type="evidence" value="ECO:0007669"/>
    <property type="project" value="InterPro"/>
</dbReference>
<dbReference type="GO" id="GO:0005524">
    <property type="term" value="F:ATP binding"/>
    <property type="evidence" value="ECO:0007669"/>
    <property type="project" value="UniProtKB-UniRule"/>
</dbReference>
<dbReference type="GO" id="GO:0004823">
    <property type="term" value="F:leucine-tRNA ligase activity"/>
    <property type="evidence" value="ECO:0000318"/>
    <property type="project" value="GO_Central"/>
</dbReference>
<dbReference type="GO" id="GO:0006429">
    <property type="term" value="P:leucyl-tRNA aminoacylation"/>
    <property type="evidence" value="ECO:0000318"/>
    <property type="project" value="GO_Central"/>
</dbReference>
<dbReference type="CDD" id="cd07958">
    <property type="entry name" value="Anticodon_Ia_Leu_BEm"/>
    <property type="match status" value="1"/>
</dbReference>
<dbReference type="FunFam" id="1.10.730.10:FF:000029">
    <property type="entry name" value="Leucine--tRNA ligase"/>
    <property type="match status" value="1"/>
</dbReference>
<dbReference type="FunFam" id="3.40.50.620:FF:000056">
    <property type="entry name" value="Leucine--tRNA ligase"/>
    <property type="match status" value="1"/>
</dbReference>
<dbReference type="FunFam" id="3.40.50.620:FF:000060">
    <property type="entry name" value="Leucine--tRNA ligase"/>
    <property type="match status" value="1"/>
</dbReference>
<dbReference type="FunFam" id="3.40.50.620:FF:000087">
    <property type="entry name" value="Leucine--tRNA ligase"/>
    <property type="match status" value="1"/>
</dbReference>
<dbReference type="FunFam" id="3.90.740.10:FF:000017">
    <property type="entry name" value="Leucine--tRNA ligase"/>
    <property type="match status" value="1"/>
</dbReference>
<dbReference type="FunFam" id="1.10.730.10:FF:000011">
    <property type="entry name" value="Leucine--tRNA ligase chloroplastic/mitochondrial"/>
    <property type="match status" value="1"/>
</dbReference>
<dbReference type="Gene3D" id="3.40.50.620">
    <property type="entry name" value="HUPs"/>
    <property type="match status" value="2"/>
</dbReference>
<dbReference type="Gene3D" id="1.10.730.10">
    <property type="entry name" value="Isoleucyl-tRNA Synthetase, Domain 1"/>
    <property type="match status" value="1"/>
</dbReference>
<dbReference type="Gene3D" id="3.90.740.10">
    <property type="entry name" value="Valyl/Leucyl/Isoleucyl-tRNA synthetase, editing domain"/>
    <property type="match status" value="1"/>
</dbReference>
<dbReference type="HAMAP" id="MF_00049_B">
    <property type="entry name" value="Leu_tRNA_synth_B"/>
    <property type="match status" value="1"/>
</dbReference>
<dbReference type="InterPro" id="IPR001412">
    <property type="entry name" value="aa-tRNA-synth_I_CS"/>
</dbReference>
<dbReference type="InterPro" id="IPR002302">
    <property type="entry name" value="Leu-tRNA-ligase"/>
</dbReference>
<dbReference type="InterPro" id="IPR025709">
    <property type="entry name" value="Leu_tRNA-synth_edit"/>
</dbReference>
<dbReference type="InterPro" id="IPR013155">
    <property type="entry name" value="M/V/L/I-tRNA-synth_anticd-bd"/>
</dbReference>
<dbReference type="InterPro" id="IPR015413">
    <property type="entry name" value="Methionyl/Leucyl_tRNA_Synth"/>
</dbReference>
<dbReference type="InterPro" id="IPR014729">
    <property type="entry name" value="Rossmann-like_a/b/a_fold"/>
</dbReference>
<dbReference type="InterPro" id="IPR009080">
    <property type="entry name" value="tRNAsynth_Ia_anticodon-bd"/>
</dbReference>
<dbReference type="InterPro" id="IPR009008">
    <property type="entry name" value="Val/Leu/Ile-tRNA-synth_edit"/>
</dbReference>
<dbReference type="NCBIfam" id="TIGR00396">
    <property type="entry name" value="leuS_bact"/>
    <property type="match status" value="1"/>
</dbReference>
<dbReference type="PANTHER" id="PTHR43740:SF2">
    <property type="entry name" value="LEUCINE--TRNA LIGASE, MITOCHONDRIAL"/>
    <property type="match status" value="1"/>
</dbReference>
<dbReference type="PANTHER" id="PTHR43740">
    <property type="entry name" value="LEUCYL-TRNA SYNTHETASE"/>
    <property type="match status" value="1"/>
</dbReference>
<dbReference type="Pfam" id="PF08264">
    <property type="entry name" value="Anticodon_1"/>
    <property type="match status" value="1"/>
</dbReference>
<dbReference type="Pfam" id="PF13603">
    <property type="entry name" value="tRNA-synt_1_2"/>
    <property type="match status" value="1"/>
</dbReference>
<dbReference type="Pfam" id="PF09334">
    <property type="entry name" value="tRNA-synt_1g"/>
    <property type="match status" value="1"/>
</dbReference>
<dbReference type="PRINTS" id="PR00985">
    <property type="entry name" value="TRNASYNTHLEU"/>
</dbReference>
<dbReference type="SUPFAM" id="SSF47323">
    <property type="entry name" value="Anticodon-binding domain of a subclass of class I aminoacyl-tRNA synthetases"/>
    <property type="match status" value="1"/>
</dbReference>
<dbReference type="SUPFAM" id="SSF52374">
    <property type="entry name" value="Nucleotidylyl transferase"/>
    <property type="match status" value="1"/>
</dbReference>
<dbReference type="SUPFAM" id="SSF50677">
    <property type="entry name" value="ValRS/IleRS/LeuRS editing domain"/>
    <property type="match status" value="1"/>
</dbReference>
<dbReference type="PROSITE" id="PS00178">
    <property type="entry name" value="AA_TRNA_LIGASE_I"/>
    <property type="match status" value="1"/>
</dbReference>
<proteinExistence type="inferred from homology"/>
<keyword id="KW-0030">Aminoacyl-tRNA synthetase</keyword>
<keyword id="KW-0067">ATP-binding</keyword>
<keyword id="KW-0963">Cytoplasm</keyword>
<keyword id="KW-0436">Ligase</keyword>
<keyword id="KW-0547">Nucleotide-binding</keyword>
<keyword id="KW-0648">Protein biosynthesis</keyword>
<keyword id="KW-1185">Reference proteome</keyword>
<protein>
    <recommendedName>
        <fullName evidence="1">Leucine--tRNA ligase</fullName>
        <ecNumber evidence="1">6.1.1.4</ecNumber>
    </recommendedName>
    <alternativeName>
        <fullName evidence="1">Leucyl-tRNA synthetase</fullName>
        <shortName evidence="1">LeuRS</shortName>
    </alternativeName>
</protein>
<organism>
    <name type="scientific">Streptomyces coelicolor (strain ATCC BAA-471 / A3(2) / M145)</name>
    <dbReference type="NCBI Taxonomy" id="100226"/>
    <lineage>
        <taxon>Bacteria</taxon>
        <taxon>Bacillati</taxon>
        <taxon>Actinomycetota</taxon>
        <taxon>Actinomycetes</taxon>
        <taxon>Kitasatosporales</taxon>
        <taxon>Streptomycetaceae</taxon>
        <taxon>Streptomyces</taxon>
        <taxon>Streptomyces albidoflavus group</taxon>
    </lineage>
</organism>
<name>SYL_STRCO</name>
<evidence type="ECO:0000255" key="1">
    <source>
        <dbReference type="HAMAP-Rule" id="MF_00049"/>
    </source>
</evidence>
<evidence type="ECO:0000256" key="2">
    <source>
        <dbReference type="SAM" id="MobiDB-lite"/>
    </source>
</evidence>
<comment type="catalytic activity">
    <reaction evidence="1">
        <text>tRNA(Leu) + L-leucine + ATP = L-leucyl-tRNA(Leu) + AMP + diphosphate</text>
        <dbReference type="Rhea" id="RHEA:11688"/>
        <dbReference type="Rhea" id="RHEA-COMP:9613"/>
        <dbReference type="Rhea" id="RHEA-COMP:9622"/>
        <dbReference type="ChEBI" id="CHEBI:30616"/>
        <dbReference type="ChEBI" id="CHEBI:33019"/>
        <dbReference type="ChEBI" id="CHEBI:57427"/>
        <dbReference type="ChEBI" id="CHEBI:78442"/>
        <dbReference type="ChEBI" id="CHEBI:78494"/>
        <dbReference type="ChEBI" id="CHEBI:456215"/>
        <dbReference type="EC" id="6.1.1.4"/>
    </reaction>
</comment>
<comment type="subcellular location">
    <subcellularLocation>
        <location evidence="1">Cytoplasm</location>
    </subcellularLocation>
</comment>
<comment type="similarity">
    <text evidence="1">Belongs to the class-I aminoacyl-tRNA synthetase family.</text>
</comment>
<gene>
    <name evidence="1" type="primary">leuS</name>
    <name type="ordered locus">SCO2571</name>
    <name type="ORF">SCC123.09c</name>
</gene>
<feature type="chain" id="PRO_0000152093" description="Leucine--tRNA ligase">
    <location>
        <begin position="1"/>
        <end position="966"/>
    </location>
</feature>
<feature type="region of interest" description="Disordered" evidence="2">
    <location>
        <begin position="561"/>
        <end position="580"/>
    </location>
</feature>
<feature type="short sequence motif" description="'HIGH' region">
    <location>
        <begin position="71"/>
        <end position="82"/>
    </location>
</feature>
<feature type="short sequence motif" description="'KMSKS' region">
    <location>
        <begin position="734"/>
        <end position="738"/>
    </location>
</feature>
<feature type="compositionally biased region" description="Basic and acidic residues" evidence="2">
    <location>
        <begin position="571"/>
        <end position="580"/>
    </location>
</feature>
<feature type="binding site" evidence="1">
    <location>
        <position position="737"/>
    </location>
    <ligand>
        <name>ATP</name>
        <dbReference type="ChEBI" id="CHEBI:30616"/>
    </ligand>
</feature>
<reference key="1">
    <citation type="journal article" date="2002" name="Nature">
        <title>Complete genome sequence of the model actinomycete Streptomyces coelicolor A3(2).</title>
        <authorList>
            <person name="Bentley S.D."/>
            <person name="Chater K.F."/>
            <person name="Cerdeno-Tarraga A.-M."/>
            <person name="Challis G.L."/>
            <person name="Thomson N.R."/>
            <person name="James K.D."/>
            <person name="Harris D.E."/>
            <person name="Quail M.A."/>
            <person name="Kieser H."/>
            <person name="Harper D."/>
            <person name="Bateman A."/>
            <person name="Brown S."/>
            <person name="Chandra G."/>
            <person name="Chen C.W."/>
            <person name="Collins M."/>
            <person name="Cronin A."/>
            <person name="Fraser A."/>
            <person name="Goble A."/>
            <person name="Hidalgo J."/>
            <person name="Hornsby T."/>
            <person name="Howarth S."/>
            <person name="Huang C.-H."/>
            <person name="Kieser T."/>
            <person name="Larke L."/>
            <person name="Murphy L.D."/>
            <person name="Oliver K."/>
            <person name="O'Neil S."/>
            <person name="Rabbinowitsch E."/>
            <person name="Rajandream M.A."/>
            <person name="Rutherford K.M."/>
            <person name="Rutter S."/>
            <person name="Seeger K."/>
            <person name="Saunders D."/>
            <person name="Sharp S."/>
            <person name="Squares R."/>
            <person name="Squares S."/>
            <person name="Taylor K."/>
            <person name="Warren T."/>
            <person name="Wietzorrek A."/>
            <person name="Woodward J.R."/>
            <person name="Barrell B.G."/>
            <person name="Parkhill J."/>
            <person name="Hopwood D.A."/>
        </authorList>
    </citation>
    <scope>NUCLEOTIDE SEQUENCE [LARGE SCALE GENOMIC DNA]</scope>
    <source>
        <strain>ATCC BAA-471 / A3(2) / M145</strain>
    </source>
</reference>
<accession>Q9RDL5</accession>